<keyword id="KW-0002">3D-structure</keyword>
<keyword id="KW-0067">ATP-binding</keyword>
<keyword id="KW-0378">Hydrolase</keyword>
<keyword id="KW-0547">Nucleotide-binding</keyword>
<keyword id="KW-0649">Protein kinase inhibitor</keyword>
<keyword id="KW-1185">Reference proteome</keyword>
<keyword id="KW-0749">Sporulation</keyword>
<sequence length="240" mass="26720">MTVRYQIEQLGDSAMMIRFGEEINEQVNGIVHAAAAYIEEQPFPGFIECIPAFTSLTVFYDMYEVYKHLPQGISSPFESVKRDVEERLAEIAEDYEVNRRIVEIPVCYGGEFGPDLEEVAKINQLSPEEVIDIHTNGEYVVYMLGFAPGFPFLGGMSKRIAAPRKSSPRPSIPAGSVGIAGLQTGVYPISTPGGWQLIGKTPLALFRPQENPPTLLRAGDIVKFVRISEKDYHAYKEESN</sequence>
<reference key="1">
    <citation type="journal article" date="1995" name="Microbiology">
        <title>Determination of a 17,484 bp nucleotide sequence around the 39 degrees region of the Bacillus subtilis chromosome and similarity analysis of the products of putative ORFs.</title>
        <authorList>
            <person name="Akagawa E."/>
            <person name="Kurita K."/>
            <person name="Sugawara T."/>
            <person name="Nakamura K."/>
            <person name="Kasahara Y."/>
            <person name="Ogasawara N."/>
            <person name="Yamane K."/>
        </authorList>
    </citation>
    <scope>NUCLEOTIDE SEQUENCE [GENOMIC DNA]</scope>
    <source>
        <strain>168</strain>
    </source>
</reference>
<reference key="2">
    <citation type="journal article" date="1996" name="Microbiology">
        <title>The 25 degrees-36 degrees region of the Bacillus subtilis chromosome: determination of the sequence of a 146 kb segment and identification of 113 genes.</title>
        <authorList>
            <person name="Yamane K."/>
            <person name="Kumano M."/>
            <person name="Kurita K."/>
        </authorList>
    </citation>
    <scope>NUCLEOTIDE SEQUENCE [GENOMIC DNA]</scope>
    <source>
        <strain>168</strain>
    </source>
</reference>
<reference key="3">
    <citation type="journal article" date="1997" name="Nature">
        <title>The complete genome sequence of the Gram-positive bacterium Bacillus subtilis.</title>
        <authorList>
            <person name="Kunst F."/>
            <person name="Ogasawara N."/>
            <person name="Moszer I."/>
            <person name="Albertini A.M."/>
            <person name="Alloni G."/>
            <person name="Azevedo V."/>
            <person name="Bertero M.G."/>
            <person name="Bessieres P."/>
            <person name="Bolotin A."/>
            <person name="Borchert S."/>
            <person name="Borriss R."/>
            <person name="Boursier L."/>
            <person name="Brans A."/>
            <person name="Braun M."/>
            <person name="Brignell S.C."/>
            <person name="Bron S."/>
            <person name="Brouillet S."/>
            <person name="Bruschi C.V."/>
            <person name="Caldwell B."/>
            <person name="Capuano V."/>
            <person name="Carter N.M."/>
            <person name="Choi S.-K."/>
            <person name="Codani J.-J."/>
            <person name="Connerton I.F."/>
            <person name="Cummings N.J."/>
            <person name="Daniel R.A."/>
            <person name="Denizot F."/>
            <person name="Devine K.M."/>
            <person name="Duesterhoeft A."/>
            <person name="Ehrlich S.D."/>
            <person name="Emmerson P.T."/>
            <person name="Entian K.-D."/>
            <person name="Errington J."/>
            <person name="Fabret C."/>
            <person name="Ferrari E."/>
            <person name="Foulger D."/>
            <person name="Fritz C."/>
            <person name="Fujita M."/>
            <person name="Fujita Y."/>
            <person name="Fuma S."/>
            <person name="Galizzi A."/>
            <person name="Galleron N."/>
            <person name="Ghim S.-Y."/>
            <person name="Glaser P."/>
            <person name="Goffeau A."/>
            <person name="Golightly E.J."/>
            <person name="Grandi G."/>
            <person name="Guiseppi G."/>
            <person name="Guy B.J."/>
            <person name="Haga K."/>
            <person name="Haiech J."/>
            <person name="Harwood C.R."/>
            <person name="Henaut A."/>
            <person name="Hilbert H."/>
            <person name="Holsappel S."/>
            <person name="Hosono S."/>
            <person name="Hullo M.-F."/>
            <person name="Itaya M."/>
            <person name="Jones L.-M."/>
            <person name="Joris B."/>
            <person name="Karamata D."/>
            <person name="Kasahara Y."/>
            <person name="Klaerr-Blanchard M."/>
            <person name="Klein C."/>
            <person name="Kobayashi Y."/>
            <person name="Koetter P."/>
            <person name="Koningstein G."/>
            <person name="Krogh S."/>
            <person name="Kumano M."/>
            <person name="Kurita K."/>
            <person name="Lapidus A."/>
            <person name="Lardinois S."/>
            <person name="Lauber J."/>
            <person name="Lazarevic V."/>
            <person name="Lee S.-M."/>
            <person name="Levine A."/>
            <person name="Liu H."/>
            <person name="Masuda S."/>
            <person name="Mauel C."/>
            <person name="Medigue C."/>
            <person name="Medina N."/>
            <person name="Mellado R.P."/>
            <person name="Mizuno M."/>
            <person name="Moestl D."/>
            <person name="Nakai S."/>
            <person name="Noback M."/>
            <person name="Noone D."/>
            <person name="O'Reilly M."/>
            <person name="Ogawa K."/>
            <person name="Ogiwara A."/>
            <person name="Oudega B."/>
            <person name="Park S.-H."/>
            <person name="Parro V."/>
            <person name="Pohl T.M."/>
            <person name="Portetelle D."/>
            <person name="Porwollik S."/>
            <person name="Prescott A.M."/>
            <person name="Presecan E."/>
            <person name="Pujic P."/>
            <person name="Purnelle B."/>
            <person name="Rapoport G."/>
            <person name="Rey M."/>
            <person name="Reynolds S."/>
            <person name="Rieger M."/>
            <person name="Rivolta C."/>
            <person name="Rocha E."/>
            <person name="Roche B."/>
            <person name="Rose M."/>
            <person name="Sadaie Y."/>
            <person name="Sato T."/>
            <person name="Scanlan E."/>
            <person name="Schleich S."/>
            <person name="Schroeter R."/>
            <person name="Scoffone F."/>
            <person name="Sekiguchi J."/>
            <person name="Sekowska A."/>
            <person name="Seror S.J."/>
            <person name="Serror P."/>
            <person name="Shin B.-S."/>
            <person name="Soldo B."/>
            <person name="Sorokin A."/>
            <person name="Tacconi E."/>
            <person name="Takagi T."/>
            <person name="Takahashi H."/>
            <person name="Takemaru K."/>
            <person name="Takeuchi M."/>
            <person name="Tamakoshi A."/>
            <person name="Tanaka T."/>
            <person name="Terpstra P."/>
            <person name="Tognoni A."/>
            <person name="Tosato V."/>
            <person name="Uchiyama S."/>
            <person name="Vandenbol M."/>
            <person name="Vannier F."/>
            <person name="Vassarotti A."/>
            <person name="Viari A."/>
            <person name="Wambutt R."/>
            <person name="Wedler E."/>
            <person name="Wedler H."/>
            <person name="Weitzenegger T."/>
            <person name="Winters P."/>
            <person name="Wipat A."/>
            <person name="Yamamoto H."/>
            <person name="Yamane K."/>
            <person name="Yasumoto K."/>
            <person name="Yata K."/>
            <person name="Yoshida K."/>
            <person name="Yoshikawa H.-F."/>
            <person name="Zumstein E."/>
            <person name="Yoshikawa H."/>
            <person name="Danchin A."/>
        </authorList>
    </citation>
    <scope>NUCLEOTIDE SEQUENCE [LARGE SCALE GENOMIC DNA]</scope>
    <source>
        <strain>168</strain>
    </source>
</reference>
<reference key="4">
    <citation type="journal article" date="1999" name="Genome Res.">
        <title>Detecting and analyzing DNA sequencing errors: toward a higher quality of the Bacillus subtilis genome sequence.</title>
        <authorList>
            <person name="Medigue C."/>
            <person name="Rose M."/>
            <person name="Viari A."/>
            <person name="Danchin A."/>
        </authorList>
    </citation>
    <scope>SEQUENCE REVISION</scope>
</reference>
<reference key="5">
    <citation type="journal article" date="1997" name="Genes Dev.">
        <title>A novel histidine kinase inhibitor regulating development in Bacillus subtilis.</title>
        <authorList>
            <person name="Wang L."/>
            <person name="Grau R."/>
            <person name="Perego M."/>
            <person name="Hoch J.A."/>
        </authorList>
    </citation>
    <scope>FUNCTION</scope>
    <scope>PROBABLE INTERACTION WITH PXPC</scope>
    <scope>INDUCTION</scope>
    <scope>DISRUPTION PHENOTYPE</scope>
    <source>
        <strain>168 / JH642</strain>
    </source>
</reference>
<reference key="6">
    <citation type="journal article" date="2017" name="J. Biol. Chem.">
        <title>Discovery of a widespread prokaryotic 5-oxoprolinase that was hiding in plain sight.</title>
        <authorList>
            <person name="Niehaus T.D."/>
            <person name="Elbadawi-Sidhu M."/>
            <person name="de Crecy-Lagard V."/>
            <person name="Fiehn O."/>
            <person name="Hanson A.D."/>
        </authorList>
    </citation>
    <scope>FUNCTION</scope>
    <scope>CATALYTIC ACTIVITY</scope>
    <scope>SUBUNIT</scope>
    <scope>DISRUPTION PHENOTYPE</scope>
</reference>
<reference evidence="12" key="7">
    <citation type="journal article" date="2008" name="J. Mol. Biol.">
        <title>Histidine kinase regulation by a cyclophilin-like inhibitor.</title>
        <authorList>
            <person name="Jacques D.A."/>
            <person name="Langley D.B."/>
            <person name="Jeffries C.M."/>
            <person name="Cunningham K.A."/>
            <person name="Burkholder W.F."/>
            <person name="Guss J.M."/>
            <person name="Trewhella J."/>
        </authorList>
    </citation>
    <scope>X-RAY CRYSTALLOGRAPHY (3.01 ANGSTROMS) OF 100-240</scope>
    <scope>INTERACTION WITH KINA</scope>
</reference>
<reference evidence="11" key="8">
    <citation type="journal article" date="2011" name="J. Mol. Biol.">
        <title>A novel structure of an antikinase and its inhibitor.</title>
        <authorList>
            <person name="Jacques D.A."/>
            <person name="Langley D.B."/>
            <person name="Hynson R.M."/>
            <person name="Whitten A.E."/>
            <person name="Kwan A."/>
            <person name="Guss J.M."/>
            <person name="Trewhella J."/>
        </authorList>
    </citation>
    <scope>STRUCTURE BY NMR OF 1-99</scope>
    <scope>INTERACTION WITH PXPC</scope>
</reference>
<protein>
    <recommendedName>
        <fullName evidence="9">5-oxoprolinase subunit B</fullName>
        <shortName evidence="9">5-OPase subunit B</shortName>
        <ecNumber evidence="4">3.5.2.9</ecNumber>
    </recommendedName>
    <alternativeName>
        <fullName evidence="9">5-oxoprolinase (ATP-hydrolyzing) subunit B</fullName>
    </alternativeName>
    <alternativeName>
        <fullName evidence="6">Antikinase KipI</fullName>
    </alternativeName>
    <alternativeName>
        <fullName>Kinase A inhibitor</fullName>
    </alternativeName>
    <alternativeName>
        <fullName>Sporulation inhibitor KipI</fullName>
    </alternativeName>
</protein>
<organism>
    <name type="scientific">Bacillus subtilis (strain 168)</name>
    <dbReference type="NCBI Taxonomy" id="224308"/>
    <lineage>
        <taxon>Bacteria</taxon>
        <taxon>Bacillati</taxon>
        <taxon>Bacillota</taxon>
        <taxon>Bacilli</taxon>
        <taxon>Bacillales</taxon>
        <taxon>Bacillaceae</taxon>
        <taxon>Bacillus</taxon>
    </lineage>
</organism>
<gene>
    <name evidence="7" type="primary">pxpB</name>
    <name evidence="8" type="synonym">kipI</name>
    <name type="synonym">ycsJ</name>
    <name type="ordered locus">BSU04080</name>
</gene>
<proteinExistence type="evidence at protein level"/>
<accession>P60495</accession>
<accession>P42967</accession>
<name>PXPB_BACSU</name>
<evidence type="ECO:0000255" key="1"/>
<evidence type="ECO:0000269" key="2">
    <source>
    </source>
</evidence>
<evidence type="ECO:0000269" key="3">
    <source>
    </source>
</evidence>
<evidence type="ECO:0000269" key="4">
    <source>
    </source>
</evidence>
<evidence type="ECO:0000269" key="5">
    <source>
    </source>
</evidence>
<evidence type="ECO:0000303" key="6">
    <source>
    </source>
</evidence>
<evidence type="ECO:0000303" key="7">
    <source>
    </source>
</evidence>
<evidence type="ECO:0000303" key="8">
    <source>
    </source>
</evidence>
<evidence type="ECO:0000305" key="9"/>
<evidence type="ECO:0000305" key="10">
    <source>
    </source>
</evidence>
<evidence type="ECO:0007744" key="11">
    <source>
        <dbReference type="PDB" id="2KWA"/>
    </source>
</evidence>
<evidence type="ECO:0007744" key="12">
    <source>
        <dbReference type="PDB" id="2ZP2"/>
    </source>
</evidence>
<evidence type="ECO:0007829" key="13">
    <source>
        <dbReference type="PDB" id="2KWA"/>
    </source>
</evidence>
<evidence type="ECO:0007829" key="14">
    <source>
        <dbReference type="PDB" id="2ZP2"/>
    </source>
</evidence>
<feature type="chain" id="PRO_0000084308" description="5-oxoprolinase subunit B">
    <location>
        <begin position="1"/>
        <end position="240"/>
    </location>
</feature>
<feature type="binding site" evidence="1">
    <location>
        <begin position="194"/>
        <end position="201"/>
    </location>
    <ligand>
        <name>ATP</name>
        <dbReference type="ChEBI" id="CHEBI:30616"/>
    </ligand>
</feature>
<feature type="strand" evidence="13">
    <location>
        <begin position="6"/>
        <end position="9"/>
    </location>
</feature>
<feature type="strand" evidence="13">
    <location>
        <begin position="11"/>
        <end position="18"/>
    </location>
</feature>
<feature type="helix" evidence="13">
    <location>
        <begin position="25"/>
        <end position="40"/>
    </location>
</feature>
<feature type="strand" evidence="13">
    <location>
        <begin position="46"/>
        <end position="51"/>
    </location>
</feature>
<feature type="strand" evidence="13">
    <location>
        <begin position="53"/>
        <end position="60"/>
    </location>
</feature>
<feature type="helix" evidence="13">
    <location>
        <begin position="62"/>
        <end position="66"/>
    </location>
</feature>
<feature type="helix" evidence="13">
    <location>
        <begin position="76"/>
        <end position="88"/>
    </location>
</feature>
<feature type="helix" evidence="13">
    <location>
        <begin position="89"/>
        <end position="91"/>
    </location>
</feature>
<feature type="helix" evidence="13">
    <location>
        <begin position="93"/>
        <end position="95"/>
    </location>
</feature>
<feature type="strand" evidence="14">
    <location>
        <begin position="101"/>
        <end position="109"/>
    </location>
</feature>
<feature type="turn" evidence="14">
    <location>
        <begin position="110"/>
        <end position="112"/>
    </location>
</feature>
<feature type="helix" evidence="14">
    <location>
        <begin position="116"/>
        <end position="122"/>
    </location>
</feature>
<feature type="helix" evidence="14">
    <location>
        <begin position="127"/>
        <end position="134"/>
    </location>
</feature>
<feature type="strand" evidence="14">
    <location>
        <begin position="139"/>
        <end position="142"/>
    </location>
</feature>
<feature type="strand" evidence="14">
    <location>
        <begin position="152"/>
        <end position="154"/>
    </location>
</feature>
<feature type="helix" evidence="14">
    <location>
        <begin position="158"/>
        <end position="160"/>
    </location>
</feature>
<feature type="strand" evidence="14">
    <location>
        <begin position="176"/>
        <end position="181"/>
    </location>
</feature>
<feature type="strand" evidence="14">
    <location>
        <begin position="183"/>
        <end position="186"/>
    </location>
</feature>
<feature type="strand" evidence="14">
    <location>
        <begin position="196"/>
        <end position="200"/>
    </location>
</feature>
<feature type="strand" evidence="14">
    <location>
        <begin position="221"/>
        <end position="226"/>
    </location>
</feature>
<dbReference type="EC" id="3.5.2.9" evidence="4"/>
<dbReference type="EMBL" id="D38161">
    <property type="protein sequence ID" value="BAA07361.1"/>
    <property type="status" value="ALT_SEQ"/>
    <property type="molecule type" value="Genomic_DNA"/>
</dbReference>
<dbReference type="EMBL" id="D50453">
    <property type="protein sequence ID" value="BAA09039.1"/>
    <property type="status" value="ALT_SEQ"/>
    <property type="molecule type" value="Genomic_DNA"/>
</dbReference>
<dbReference type="EMBL" id="AL009126">
    <property type="protein sequence ID" value="CAB12216.2"/>
    <property type="molecule type" value="Genomic_DNA"/>
</dbReference>
<dbReference type="PIR" id="G69765">
    <property type="entry name" value="G69765"/>
</dbReference>
<dbReference type="RefSeq" id="NP_388290.2">
    <property type="nucleotide sequence ID" value="NC_000964.3"/>
</dbReference>
<dbReference type="RefSeq" id="WP_003234420.1">
    <property type="nucleotide sequence ID" value="NZ_OZ025638.1"/>
</dbReference>
<dbReference type="PDB" id="2KWA">
    <property type="method" value="NMR"/>
    <property type="chains" value="A=1-99"/>
</dbReference>
<dbReference type="PDB" id="2ZP2">
    <property type="method" value="X-ray"/>
    <property type="resolution" value="3.01 A"/>
    <property type="chains" value="A/B=100-240"/>
</dbReference>
<dbReference type="PDBsum" id="2KWA"/>
<dbReference type="PDBsum" id="2ZP2"/>
<dbReference type="BMRB" id="P60495"/>
<dbReference type="SMR" id="P60495"/>
<dbReference type="FunCoup" id="P60495">
    <property type="interactions" value="14"/>
</dbReference>
<dbReference type="STRING" id="224308.BSU04080"/>
<dbReference type="PaxDb" id="224308-BSU04080"/>
<dbReference type="EnsemblBacteria" id="CAB12216">
    <property type="protein sequence ID" value="CAB12216"/>
    <property type="gene ID" value="BSU_04080"/>
</dbReference>
<dbReference type="GeneID" id="938256"/>
<dbReference type="KEGG" id="bsu:BSU04080"/>
<dbReference type="PATRIC" id="fig|224308.179.peg.434"/>
<dbReference type="eggNOG" id="COG2049">
    <property type="taxonomic scope" value="Bacteria"/>
</dbReference>
<dbReference type="InParanoid" id="P60495"/>
<dbReference type="OrthoDB" id="9778567at2"/>
<dbReference type="PhylomeDB" id="P60495"/>
<dbReference type="BioCyc" id="BSUB:BSU04080-MONOMER"/>
<dbReference type="BRENDA" id="3.5.2.9">
    <property type="organism ID" value="658"/>
</dbReference>
<dbReference type="EvolutionaryTrace" id="P60495"/>
<dbReference type="Proteomes" id="UP000001570">
    <property type="component" value="Chromosome"/>
</dbReference>
<dbReference type="GO" id="GO:0017168">
    <property type="term" value="F:5-oxoprolinase (ATP-hydrolyzing) activity"/>
    <property type="evidence" value="ECO:0007669"/>
    <property type="project" value="UniProtKB-EC"/>
</dbReference>
<dbReference type="GO" id="GO:0005524">
    <property type="term" value="F:ATP binding"/>
    <property type="evidence" value="ECO:0007669"/>
    <property type="project" value="UniProtKB-KW"/>
</dbReference>
<dbReference type="GO" id="GO:0004860">
    <property type="term" value="F:protein kinase inhibitor activity"/>
    <property type="evidence" value="ECO:0007669"/>
    <property type="project" value="UniProtKB-KW"/>
</dbReference>
<dbReference type="GO" id="GO:0030435">
    <property type="term" value="P:sporulation resulting in formation of a cellular spore"/>
    <property type="evidence" value="ECO:0007669"/>
    <property type="project" value="UniProtKB-KW"/>
</dbReference>
<dbReference type="Gene3D" id="3.30.1360.40">
    <property type="match status" value="1"/>
</dbReference>
<dbReference type="Gene3D" id="2.40.100.10">
    <property type="entry name" value="Cyclophilin-like"/>
    <property type="match status" value="1"/>
</dbReference>
<dbReference type="InterPro" id="IPR003833">
    <property type="entry name" value="CT_C_D"/>
</dbReference>
<dbReference type="InterPro" id="IPR029000">
    <property type="entry name" value="Cyclophilin-like_dom_sf"/>
</dbReference>
<dbReference type="InterPro" id="IPR010016">
    <property type="entry name" value="PxpB"/>
</dbReference>
<dbReference type="NCBIfam" id="TIGR00370">
    <property type="entry name" value="5-oxoprolinase subunit PxpB"/>
    <property type="match status" value="1"/>
</dbReference>
<dbReference type="PANTHER" id="PTHR34698">
    <property type="entry name" value="5-OXOPROLINASE SUBUNIT B"/>
    <property type="match status" value="1"/>
</dbReference>
<dbReference type="PANTHER" id="PTHR34698:SF2">
    <property type="entry name" value="5-OXOPROLINASE SUBUNIT B"/>
    <property type="match status" value="1"/>
</dbReference>
<dbReference type="Pfam" id="PF02682">
    <property type="entry name" value="CT_C_D"/>
    <property type="match status" value="1"/>
</dbReference>
<dbReference type="SMART" id="SM00796">
    <property type="entry name" value="AHS1"/>
    <property type="match status" value="1"/>
</dbReference>
<dbReference type="SUPFAM" id="SSF50891">
    <property type="entry name" value="Cyclophilin-like"/>
    <property type="match status" value="1"/>
</dbReference>
<dbReference type="SUPFAM" id="SSF160467">
    <property type="entry name" value="PH0987 N-terminal domain-like"/>
    <property type="match status" value="1"/>
</dbReference>
<comment type="function">
    <text evidence="4 5">Catalyzes the cleavage of 5-oxoproline to form L-glutamate coupled to the hydrolysis of ATP to ADP and inorganic phosphate (PubMed:28830929). In addition, is a potent inhibitor of the autophosphorylation reaction of kinase A (kinA) and its reverse reaction, but does not inhibit phosphate transfer to the Spo0F response regulator once kinase A is phosphorylated. Is an inhibitor of the catalytic domain of kinase A affecting the ATP/ADP reactions and not the phosphotransferase functions of this domain. The inhibition is non-competitive with respect to ATP (PubMed:9334321).</text>
</comment>
<comment type="catalytic activity">
    <reaction evidence="4">
        <text>5-oxo-L-proline + ATP + 2 H2O = L-glutamate + ADP + phosphate + H(+)</text>
        <dbReference type="Rhea" id="RHEA:10348"/>
        <dbReference type="ChEBI" id="CHEBI:15377"/>
        <dbReference type="ChEBI" id="CHEBI:15378"/>
        <dbReference type="ChEBI" id="CHEBI:29985"/>
        <dbReference type="ChEBI" id="CHEBI:30616"/>
        <dbReference type="ChEBI" id="CHEBI:43474"/>
        <dbReference type="ChEBI" id="CHEBI:58402"/>
        <dbReference type="ChEBI" id="CHEBI:456216"/>
        <dbReference type="EC" id="3.5.2.9"/>
    </reaction>
</comment>
<comment type="subunit">
    <text evidence="2 3 4 5">Forms a complex composed of PxpA, PxpB and PxpC (PubMed:28830929). Interacts with PxpC (KipA) (PubMed:21050859, PubMed:28830929, PubMed:9334321). Interaction with PxpC prevents the inhibitory action of PxpB (KipI) (PubMed:21050859, PubMed:9334321). Interacts with KinA. Two PxpB monomers bind via their C-domains at a conserved proline in the KinA dimerization and histidine-phosphotransfer (DHp) domain (PubMed:18823995).</text>
</comment>
<comment type="induction">
    <text evidence="5">Induced by glucose when readily available sources of nitrogen, such as ammonia or glutamine, are scarce. Transcriptionally activated by TnrA and repressed by KipR.</text>
</comment>
<comment type="disruption phenotype">
    <text evidence="4 5">Deletion of the gene enhances sporulation (PubMed:9334321). Deletion mutant grows less well than wild type on minimal medium with ammonium as nitrogen source and cannot grow on 5-oxoproline. Mutant lacks 5-oxoprolinase activity and accumulates 5-oxo-L-proline (PubMed:28830929).</text>
</comment>
<comment type="similarity">
    <text evidence="9">Belongs to the PxpB family.</text>
</comment>
<comment type="caution">
    <text evidence="10">Was originally (PubMed:8574415, PubMed:8969502) thought to be a longer ORF that encodes what is now known to be pxpB (kipI) and pxpC (kipA).</text>
</comment>